<keyword id="KW-0963">Cytoplasm</keyword>
<keyword id="KW-0342">GTP-binding</keyword>
<keyword id="KW-0396">Initiation factor</keyword>
<keyword id="KW-0547">Nucleotide-binding</keyword>
<keyword id="KW-0648">Protein biosynthesis</keyword>
<keyword id="KW-1185">Reference proteome</keyword>
<proteinExistence type="inferred from homology"/>
<sequence>MSKIRVHEYAKKHNISSKDLMTKLKEMNIEVSNHMTMLDDEVVNKLDNEYQAEKPSVADEFEVEEKVVRSKKNSNKKKKKGKGNEDKRQENFAGRQQTQTVETPDKITFSGSLTVGDLAKKLSKEPSEIIKKLFMLGIMATINQDLDKDTIELIANDYGIEVEEEVIVSETEFETFIDEQDDEENLKERPAVVTIMGHVDHGKTTLLDSIRNSKVTAGEAGGITQHIGAYQVELNDKKITFLDTPGHAAFTTMRARGAQVTDITIIVVAADDGVMPQTVEAINHAKAAGVPIIVAVNKMDKPAANPDRVMQELTEYELVPEAWGGDTIFVPISAIQGEGIDNLLEMILLISEVEEYKANPNRYATGTVIEAQLDKGKGTIATLLVQNGTLRVGDPIVVGTSFGRVRAMVSDIGRRVKVAGPSTPVEITGLNEVPQAGDRFMAFADEKKARQIGESRAQEALLAQRGEKSKLSLEDLFQQIQEGDVKEINLIVKADVQGSVEAMAASLRKIDVEGVKVKIIHTGVGAITESDIILASASNAIVIGFNVRPDVNAKRTAELENVDIRLHRIIYKVIEEIEAAMQGMLDPEFEEKVIGQAEVRQTFKVTKVGTIAGCYVTDGKITRDSGVRIIRDGVVIFEGQLDTLKRFKDDVKEVAQNYECGITIERYNDLKEGDIIEAYIMEEVKR</sequence>
<comment type="function">
    <text evidence="2">One of the essential components for the initiation of protein synthesis. Protects formylmethionyl-tRNA from spontaneous hydrolysis and promotes its binding to the 30S ribosomal subunits. Also involved in the hydrolysis of GTP during the formation of the 70S ribosomal complex.</text>
</comment>
<comment type="subcellular location">
    <subcellularLocation>
        <location evidence="2">Cytoplasm</location>
    </subcellularLocation>
</comment>
<comment type="similarity">
    <text evidence="2">Belongs to the TRAFAC class translation factor GTPase superfamily. Classic translation factor GTPase family. IF-2 subfamily.</text>
</comment>
<reference key="1">
    <citation type="journal article" date="2003" name="Nature">
        <title>The genome sequence of Bacillus anthracis Ames and comparison to closely related bacteria.</title>
        <authorList>
            <person name="Read T.D."/>
            <person name="Peterson S.N."/>
            <person name="Tourasse N.J."/>
            <person name="Baillie L.W."/>
            <person name="Paulsen I.T."/>
            <person name="Nelson K.E."/>
            <person name="Tettelin H."/>
            <person name="Fouts D.E."/>
            <person name="Eisen J.A."/>
            <person name="Gill S.R."/>
            <person name="Holtzapple E.K."/>
            <person name="Okstad O.A."/>
            <person name="Helgason E."/>
            <person name="Rilstone J."/>
            <person name="Wu M."/>
            <person name="Kolonay J.F."/>
            <person name="Beanan M.J."/>
            <person name="Dodson R.J."/>
            <person name="Brinkac L.M."/>
            <person name="Gwinn M.L."/>
            <person name="DeBoy R.T."/>
            <person name="Madpu R."/>
            <person name="Daugherty S.C."/>
            <person name="Durkin A.S."/>
            <person name="Haft D.H."/>
            <person name="Nelson W.C."/>
            <person name="Peterson J.D."/>
            <person name="Pop M."/>
            <person name="Khouri H.M."/>
            <person name="Radune D."/>
            <person name="Benton J.L."/>
            <person name="Mahamoud Y."/>
            <person name="Jiang L."/>
            <person name="Hance I.R."/>
            <person name="Weidman J.F."/>
            <person name="Berry K.J."/>
            <person name="Plaut R.D."/>
            <person name="Wolf A.M."/>
            <person name="Watkins K.L."/>
            <person name="Nierman W.C."/>
            <person name="Hazen A."/>
            <person name="Cline R.T."/>
            <person name="Redmond C."/>
            <person name="Thwaite J.E."/>
            <person name="White O."/>
            <person name="Salzberg S.L."/>
            <person name="Thomason B."/>
            <person name="Friedlander A.M."/>
            <person name="Koehler T.M."/>
            <person name="Hanna P.C."/>
            <person name="Kolstoe A.-B."/>
            <person name="Fraser C.M."/>
        </authorList>
    </citation>
    <scope>NUCLEOTIDE SEQUENCE [LARGE SCALE GENOMIC DNA]</scope>
    <source>
        <strain>Ames / isolate Porton</strain>
    </source>
</reference>
<reference key="2">
    <citation type="journal article" date="2009" name="J. Bacteriol.">
        <title>The complete genome sequence of Bacillus anthracis Ames 'Ancestor'.</title>
        <authorList>
            <person name="Ravel J."/>
            <person name="Jiang L."/>
            <person name="Stanley S.T."/>
            <person name="Wilson M.R."/>
            <person name="Decker R.S."/>
            <person name="Read T.D."/>
            <person name="Worsham P."/>
            <person name="Keim P.S."/>
            <person name="Salzberg S.L."/>
            <person name="Fraser-Liggett C.M."/>
            <person name="Rasko D.A."/>
        </authorList>
    </citation>
    <scope>NUCLEOTIDE SEQUENCE [LARGE SCALE GENOMIC DNA]</scope>
    <source>
        <strain>Ames ancestor</strain>
    </source>
</reference>
<reference key="3">
    <citation type="submission" date="2004-01" db="EMBL/GenBank/DDBJ databases">
        <title>Complete genome sequence of Bacillus anthracis Sterne.</title>
        <authorList>
            <person name="Brettin T.S."/>
            <person name="Bruce D."/>
            <person name="Challacombe J.F."/>
            <person name="Gilna P."/>
            <person name="Han C."/>
            <person name="Hill K."/>
            <person name="Hitchcock P."/>
            <person name="Jackson P."/>
            <person name="Keim P."/>
            <person name="Longmire J."/>
            <person name="Lucas S."/>
            <person name="Okinaka R."/>
            <person name="Richardson P."/>
            <person name="Rubin E."/>
            <person name="Tice H."/>
        </authorList>
    </citation>
    <scope>NUCLEOTIDE SEQUENCE [LARGE SCALE GENOMIC DNA]</scope>
    <source>
        <strain>Sterne</strain>
    </source>
</reference>
<name>IF2_BACAN</name>
<gene>
    <name evidence="2" type="primary">infB</name>
    <name type="ordered locus">BA_3950</name>
    <name type="ordered locus">GBAA_3950</name>
    <name type="ordered locus">BAS3664</name>
</gene>
<protein>
    <recommendedName>
        <fullName evidence="2">Translation initiation factor IF-2</fullName>
    </recommendedName>
</protein>
<dbReference type="EMBL" id="AE016879">
    <property type="protein sequence ID" value="AAP27679.1"/>
    <property type="molecule type" value="Genomic_DNA"/>
</dbReference>
<dbReference type="EMBL" id="AE017334">
    <property type="protein sequence ID" value="AAT33064.1"/>
    <property type="molecule type" value="Genomic_DNA"/>
</dbReference>
<dbReference type="EMBL" id="AE017225">
    <property type="protein sequence ID" value="AAT55966.1"/>
    <property type="molecule type" value="Genomic_DNA"/>
</dbReference>
<dbReference type="RefSeq" id="NP_846193.1">
    <property type="nucleotide sequence ID" value="NC_003997.3"/>
</dbReference>
<dbReference type="RefSeq" id="WP_000036339.1">
    <property type="nucleotide sequence ID" value="NZ_WXXJ01000026.1"/>
</dbReference>
<dbReference type="RefSeq" id="YP_029915.1">
    <property type="nucleotide sequence ID" value="NC_005945.1"/>
</dbReference>
<dbReference type="SMR" id="Q81WM3"/>
<dbReference type="IntAct" id="Q81WM3">
    <property type="interactions" value="4"/>
</dbReference>
<dbReference type="STRING" id="261594.GBAA_3950"/>
<dbReference type="DNASU" id="1086560"/>
<dbReference type="GeneID" id="45023641"/>
<dbReference type="KEGG" id="ban:BA_3950"/>
<dbReference type="KEGG" id="bar:GBAA_3950"/>
<dbReference type="KEGG" id="bat:BAS3664"/>
<dbReference type="PATRIC" id="fig|198094.11.peg.3920"/>
<dbReference type="eggNOG" id="COG0532">
    <property type="taxonomic scope" value="Bacteria"/>
</dbReference>
<dbReference type="HOGENOM" id="CLU_006301_5_1_9"/>
<dbReference type="OMA" id="RKNPWMN"/>
<dbReference type="OrthoDB" id="9811804at2"/>
<dbReference type="Proteomes" id="UP000000427">
    <property type="component" value="Chromosome"/>
</dbReference>
<dbReference type="Proteomes" id="UP000000594">
    <property type="component" value="Chromosome"/>
</dbReference>
<dbReference type="GO" id="GO:0005829">
    <property type="term" value="C:cytosol"/>
    <property type="evidence" value="ECO:0007669"/>
    <property type="project" value="TreeGrafter"/>
</dbReference>
<dbReference type="GO" id="GO:0005525">
    <property type="term" value="F:GTP binding"/>
    <property type="evidence" value="ECO:0007669"/>
    <property type="project" value="UniProtKB-KW"/>
</dbReference>
<dbReference type="GO" id="GO:0003924">
    <property type="term" value="F:GTPase activity"/>
    <property type="evidence" value="ECO:0007669"/>
    <property type="project" value="UniProtKB-UniRule"/>
</dbReference>
<dbReference type="GO" id="GO:0003743">
    <property type="term" value="F:translation initiation factor activity"/>
    <property type="evidence" value="ECO:0007669"/>
    <property type="project" value="UniProtKB-UniRule"/>
</dbReference>
<dbReference type="CDD" id="cd01887">
    <property type="entry name" value="IF2_eIF5B"/>
    <property type="match status" value="1"/>
</dbReference>
<dbReference type="CDD" id="cd03702">
    <property type="entry name" value="IF2_mtIF2_II"/>
    <property type="match status" value="1"/>
</dbReference>
<dbReference type="CDD" id="cd03692">
    <property type="entry name" value="mtIF2_IVc"/>
    <property type="match status" value="1"/>
</dbReference>
<dbReference type="FunFam" id="1.10.10.2480:FF:000001">
    <property type="entry name" value="Translation initiation factor IF-2"/>
    <property type="match status" value="1"/>
</dbReference>
<dbReference type="FunFam" id="2.40.30.10:FF:000007">
    <property type="entry name" value="Translation initiation factor IF-2"/>
    <property type="match status" value="1"/>
</dbReference>
<dbReference type="FunFam" id="2.40.30.10:FF:000008">
    <property type="entry name" value="Translation initiation factor IF-2"/>
    <property type="match status" value="1"/>
</dbReference>
<dbReference type="FunFam" id="3.40.50.10050:FF:000001">
    <property type="entry name" value="Translation initiation factor IF-2"/>
    <property type="match status" value="1"/>
</dbReference>
<dbReference type="FunFam" id="3.40.50.300:FF:000019">
    <property type="entry name" value="Translation initiation factor IF-2"/>
    <property type="match status" value="1"/>
</dbReference>
<dbReference type="Gene3D" id="1.10.10.2480">
    <property type="match status" value="1"/>
</dbReference>
<dbReference type="Gene3D" id="3.40.50.300">
    <property type="entry name" value="P-loop containing nucleotide triphosphate hydrolases"/>
    <property type="match status" value="1"/>
</dbReference>
<dbReference type="Gene3D" id="2.40.30.10">
    <property type="entry name" value="Translation factors"/>
    <property type="match status" value="2"/>
</dbReference>
<dbReference type="Gene3D" id="3.40.50.10050">
    <property type="entry name" value="Translation initiation factor IF- 2, domain 3"/>
    <property type="match status" value="1"/>
</dbReference>
<dbReference type="HAMAP" id="MF_00100_B">
    <property type="entry name" value="IF_2_B"/>
    <property type="match status" value="1"/>
</dbReference>
<dbReference type="InterPro" id="IPR053905">
    <property type="entry name" value="EF-G-like_DII"/>
</dbReference>
<dbReference type="InterPro" id="IPR044145">
    <property type="entry name" value="IF2_II"/>
</dbReference>
<dbReference type="InterPro" id="IPR006847">
    <property type="entry name" value="IF2_N"/>
</dbReference>
<dbReference type="InterPro" id="IPR027417">
    <property type="entry name" value="P-loop_NTPase"/>
</dbReference>
<dbReference type="InterPro" id="IPR005225">
    <property type="entry name" value="Small_GTP-bd"/>
</dbReference>
<dbReference type="InterPro" id="IPR000795">
    <property type="entry name" value="T_Tr_GTP-bd_dom"/>
</dbReference>
<dbReference type="InterPro" id="IPR000178">
    <property type="entry name" value="TF_IF2_bacterial-like"/>
</dbReference>
<dbReference type="InterPro" id="IPR015760">
    <property type="entry name" value="TIF_IF2"/>
</dbReference>
<dbReference type="InterPro" id="IPR023115">
    <property type="entry name" value="TIF_IF2_dom3"/>
</dbReference>
<dbReference type="InterPro" id="IPR036925">
    <property type="entry name" value="TIF_IF2_dom3_sf"/>
</dbReference>
<dbReference type="InterPro" id="IPR009000">
    <property type="entry name" value="Transl_B-barrel_sf"/>
</dbReference>
<dbReference type="NCBIfam" id="TIGR00487">
    <property type="entry name" value="IF-2"/>
    <property type="match status" value="1"/>
</dbReference>
<dbReference type="NCBIfam" id="TIGR00231">
    <property type="entry name" value="small_GTP"/>
    <property type="match status" value="1"/>
</dbReference>
<dbReference type="PANTHER" id="PTHR43381:SF5">
    <property type="entry name" value="TR-TYPE G DOMAIN-CONTAINING PROTEIN"/>
    <property type="match status" value="1"/>
</dbReference>
<dbReference type="PANTHER" id="PTHR43381">
    <property type="entry name" value="TRANSLATION INITIATION FACTOR IF-2-RELATED"/>
    <property type="match status" value="1"/>
</dbReference>
<dbReference type="Pfam" id="PF22042">
    <property type="entry name" value="EF-G_D2"/>
    <property type="match status" value="1"/>
</dbReference>
<dbReference type="Pfam" id="PF00009">
    <property type="entry name" value="GTP_EFTU"/>
    <property type="match status" value="1"/>
</dbReference>
<dbReference type="Pfam" id="PF11987">
    <property type="entry name" value="IF-2"/>
    <property type="match status" value="1"/>
</dbReference>
<dbReference type="Pfam" id="PF04760">
    <property type="entry name" value="IF2_N"/>
    <property type="match status" value="2"/>
</dbReference>
<dbReference type="SUPFAM" id="SSF52156">
    <property type="entry name" value="Initiation factor IF2/eIF5b, domain 3"/>
    <property type="match status" value="1"/>
</dbReference>
<dbReference type="SUPFAM" id="SSF52540">
    <property type="entry name" value="P-loop containing nucleoside triphosphate hydrolases"/>
    <property type="match status" value="1"/>
</dbReference>
<dbReference type="SUPFAM" id="SSF50447">
    <property type="entry name" value="Translation proteins"/>
    <property type="match status" value="2"/>
</dbReference>
<dbReference type="PROSITE" id="PS51722">
    <property type="entry name" value="G_TR_2"/>
    <property type="match status" value="1"/>
</dbReference>
<dbReference type="PROSITE" id="PS01176">
    <property type="entry name" value="IF2"/>
    <property type="match status" value="1"/>
</dbReference>
<evidence type="ECO:0000250" key="1"/>
<evidence type="ECO:0000255" key="2">
    <source>
        <dbReference type="HAMAP-Rule" id="MF_00100"/>
    </source>
</evidence>
<evidence type="ECO:0000256" key="3">
    <source>
        <dbReference type="SAM" id="MobiDB-lite"/>
    </source>
</evidence>
<accession>Q81WM3</accession>
<accession>Q6HUS3</accession>
<accession>Q6KP05</accession>
<feature type="chain" id="PRO_0000137167" description="Translation initiation factor IF-2">
    <location>
        <begin position="1"/>
        <end position="686"/>
    </location>
</feature>
<feature type="domain" description="tr-type G">
    <location>
        <begin position="188"/>
        <end position="357"/>
    </location>
</feature>
<feature type="region of interest" description="Disordered" evidence="3">
    <location>
        <begin position="54"/>
        <end position="105"/>
    </location>
</feature>
<feature type="region of interest" description="G1" evidence="1">
    <location>
        <begin position="197"/>
        <end position="204"/>
    </location>
</feature>
<feature type="region of interest" description="G2" evidence="1">
    <location>
        <begin position="222"/>
        <end position="226"/>
    </location>
</feature>
<feature type="region of interest" description="G3" evidence="1">
    <location>
        <begin position="243"/>
        <end position="246"/>
    </location>
</feature>
<feature type="region of interest" description="G4" evidence="1">
    <location>
        <begin position="297"/>
        <end position="300"/>
    </location>
</feature>
<feature type="region of interest" description="G5" evidence="1">
    <location>
        <begin position="333"/>
        <end position="335"/>
    </location>
</feature>
<feature type="compositionally biased region" description="Basic residues" evidence="3">
    <location>
        <begin position="69"/>
        <end position="81"/>
    </location>
</feature>
<feature type="binding site" evidence="2">
    <location>
        <begin position="197"/>
        <end position="204"/>
    </location>
    <ligand>
        <name>GTP</name>
        <dbReference type="ChEBI" id="CHEBI:37565"/>
    </ligand>
</feature>
<feature type="binding site" evidence="2">
    <location>
        <begin position="243"/>
        <end position="247"/>
    </location>
    <ligand>
        <name>GTP</name>
        <dbReference type="ChEBI" id="CHEBI:37565"/>
    </ligand>
</feature>
<feature type="binding site" evidence="2">
    <location>
        <begin position="297"/>
        <end position="300"/>
    </location>
    <ligand>
        <name>GTP</name>
        <dbReference type="ChEBI" id="CHEBI:37565"/>
    </ligand>
</feature>
<organism>
    <name type="scientific">Bacillus anthracis</name>
    <dbReference type="NCBI Taxonomy" id="1392"/>
    <lineage>
        <taxon>Bacteria</taxon>
        <taxon>Bacillati</taxon>
        <taxon>Bacillota</taxon>
        <taxon>Bacilli</taxon>
        <taxon>Bacillales</taxon>
        <taxon>Bacillaceae</taxon>
        <taxon>Bacillus</taxon>
        <taxon>Bacillus cereus group</taxon>
    </lineage>
</organism>